<accession>A0PWH2</accession>
<sequence length="171" mass="19205">MTSPQKAILAGGCFWGMQDLIRKQPGVIATRVGYSGGDVANATYRNHGTHAEAVEIIFDPQATDYRTLLEFFFQIHDPTTPNRQGNDRGTSYRSAIYYLDDEQKRVALDTIADVEASGLWPGKVVTEVSPAGDFWEAEPEHQHYLQRYPSGYTCHFIRPGWKLPRRATAGQ</sequence>
<evidence type="ECO:0000255" key="1">
    <source>
        <dbReference type="HAMAP-Rule" id="MF_01401"/>
    </source>
</evidence>
<organism>
    <name type="scientific">Mycobacterium ulcerans (strain Agy99)</name>
    <dbReference type="NCBI Taxonomy" id="362242"/>
    <lineage>
        <taxon>Bacteria</taxon>
        <taxon>Bacillati</taxon>
        <taxon>Actinomycetota</taxon>
        <taxon>Actinomycetes</taxon>
        <taxon>Mycobacteriales</taxon>
        <taxon>Mycobacteriaceae</taxon>
        <taxon>Mycobacterium</taxon>
        <taxon>Mycobacterium ulcerans group</taxon>
    </lineage>
</organism>
<reference key="1">
    <citation type="journal article" date="2007" name="Genome Res.">
        <title>Reductive evolution and niche adaptation inferred from the genome of Mycobacterium ulcerans, the causative agent of Buruli ulcer.</title>
        <authorList>
            <person name="Stinear T.P."/>
            <person name="Seemann T."/>
            <person name="Pidot S."/>
            <person name="Frigui W."/>
            <person name="Reysset G."/>
            <person name="Garnier T."/>
            <person name="Meurice G."/>
            <person name="Simon D."/>
            <person name="Bouchier C."/>
            <person name="Ma L."/>
            <person name="Tichit M."/>
            <person name="Porter J.L."/>
            <person name="Ryan J."/>
            <person name="Johnson P.D.R."/>
            <person name="Davies J.K."/>
            <person name="Jenkin G.A."/>
            <person name="Small P.L.C."/>
            <person name="Jones L.M."/>
            <person name="Tekaia F."/>
            <person name="Laval F."/>
            <person name="Daffe M."/>
            <person name="Parkhill J."/>
            <person name="Cole S.T."/>
        </authorList>
    </citation>
    <scope>NUCLEOTIDE SEQUENCE [LARGE SCALE GENOMIC DNA]</scope>
    <source>
        <strain>Agy99</strain>
    </source>
</reference>
<comment type="function">
    <text evidence="1">Has an important function as a repair enzyme for proteins that have been inactivated by oxidation. Catalyzes the reversible oxidation-reduction of methionine sulfoxide in proteins to methionine.</text>
</comment>
<comment type="catalytic activity">
    <reaction evidence="1">
        <text>L-methionyl-[protein] + [thioredoxin]-disulfide + H2O = L-methionyl-(S)-S-oxide-[protein] + [thioredoxin]-dithiol</text>
        <dbReference type="Rhea" id="RHEA:14217"/>
        <dbReference type="Rhea" id="RHEA-COMP:10698"/>
        <dbReference type="Rhea" id="RHEA-COMP:10700"/>
        <dbReference type="Rhea" id="RHEA-COMP:12313"/>
        <dbReference type="Rhea" id="RHEA-COMP:12315"/>
        <dbReference type="ChEBI" id="CHEBI:15377"/>
        <dbReference type="ChEBI" id="CHEBI:16044"/>
        <dbReference type="ChEBI" id="CHEBI:29950"/>
        <dbReference type="ChEBI" id="CHEBI:44120"/>
        <dbReference type="ChEBI" id="CHEBI:50058"/>
        <dbReference type="EC" id="1.8.4.11"/>
    </reaction>
</comment>
<comment type="catalytic activity">
    <reaction evidence="1">
        <text>[thioredoxin]-disulfide + L-methionine + H2O = L-methionine (S)-S-oxide + [thioredoxin]-dithiol</text>
        <dbReference type="Rhea" id="RHEA:19993"/>
        <dbReference type="Rhea" id="RHEA-COMP:10698"/>
        <dbReference type="Rhea" id="RHEA-COMP:10700"/>
        <dbReference type="ChEBI" id="CHEBI:15377"/>
        <dbReference type="ChEBI" id="CHEBI:29950"/>
        <dbReference type="ChEBI" id="CHEBI:50058"/>
        <dbReference type="ChEBI" id="CHEBI:57844"/>
        <dbReference type="ChEBI" id="CHEBI:58772"/>
        <dbReference type="EC" id="1.8.4.11"/>
    </reaction>
</comment>
<comment type="similarity">
    <text evidence="1">Belongs to the MsrA Met sulfoxide reductase family.</text>
</comment>
<proteinExistence type="inferred from homology"/>
<dbReference type="EC" id="1.8.4.11" evidence="1"/>
<dbReference type="EMBL" id="CP000325">
    <property type="protein sequence ID" value="ABL06691.1"/>
    <property type="molecule type" value="Genomic_DNA"/>
</dbReference>
<dbReference type="RefSeq" id="WP_011742283.1">
    <property type="nucleotide sequence ID" value="NC_008611.1"/>
</dbReference>
<dbReference type="SMR" id="A0PWH2"/>
<dbReference type="KEGG" id="mul:MUL_4773"/>
<dbReference type="eggNOG" id="COG0225">
    <property type="taxonomic scope" value="Bacteria"/>
</dbReference>
<dbReference type="HOGENOM" id="CLU_031040_10_2_11"/>
<dbReference type="Proteomes" id="UP000000765">
    <property type="component" value="Chromosome"/>
</dbReference>
<dbReference type="GO" id="GO:0033744">
    <property type="term" value="F:L-methionine:thioredoxin-disulfide S-oxidoreductase activity"/>
    <property type="evidence" value="ECO:0007669"/>
    <property type="project" value="RHEA"/>
</dbReference>
<dbReference type="GO" id="GO:0008113">
    <property type="term" value="F:peptide-methionine (S)-S-oxide reductase activity"/>
    <property type="evidence" value="ECO:0007669"/>
    <property type="project" value="UniProtKB-UniRule"/>
</dbReference>
<dbReference type="GO" id="GO:0036211">
    <property type="term" value="P:protein modification process"/>
    <property type="evidence" value="ECO:0007669"/>
    <property type="project" value="UniProtKB-UniRule"/>
</dbReference>
<dbReference type="FunFam" id="3.30.1060.10:FF:000005">
    <property type="entry name" value="Peptide methionine sulfoxide reductase MsrA"/>
    <property type="match status" value="1"/>
</dbReference>
<dbReference type="Gene3D" id="3.30.1060.10">
    <property type="entry name" value="Peptide methionine sulphoxide reductase MsrA"/>
    <property type="match status" value="1"/>
</dbReference>
<dbReference type="HAMAP" id="MF_01401">
    <property type="entry name" value="MsrA"/>
    <property type="match status" value="1"/>
</dbReference>
<dbReference type="InterPro" id="IPR002569">
    <property type="entry name" value="Met_Sox_Rdtase_MsrA_dom"/>
</dbReference>
<dbReference type="InterPro" id="IPR036509">
    <property type="entry name" value="Met_Sox_Rdtase_MsrA_sf"/>
</dbReference>
<dbReference type="NCBIfam" id="TIGR00401">
    <property type="entry name" value="msrA"/>
    <property type="match status" value="1"/>
</dbReference>
<dbReference type="PANTHER" id="PTHR43774">
    <property type="entry name" value="PEPTIDE METHIONINE SULFOXIDE REDUCTASE"/>
    <property type="match status" value="1"/>
</dbReference>
<dbReference type="PANTHER" id="PTHR43774:SF1">
    <property type="entry name" value="PEPTIDE METHIONINE SULFOXIDE REDUCTASE MSRA 2"/>
    <property type="match status" value="1"/>
</dbReference>
<dbReference type="Pfam" id="PF01625">
    <property type="entry name" value="PMSR"/>
    <property type="match status" value="1"/>
</dbReference>
<dbReference type="SUPFAM" id="SSF55068">
    <property type="entry name" value="Peptide methionine sulfoxide reductase"/>
    <property type="match status" value="1"/>
</dbReference>
<name>MSRA_MYCUA</name>
<feature type="chain" id="PRO_1000068345" description="Peptide methionine sulfoxide reductase MsrA">
    <location>
        <begin position="1"/>
        <end position="171"/>
    </location>
</feature>
<feature type="active site" evidence="1">
    <location>
        <position position="13"/>
    </location>
</feature>
<keyword id="KW-0560">Oxidoreductase</keyword>
<protein>
    <recommendedName>
        <fullName evidence="1">Peptide methionine sulfoxide reductase MsrA</fullName>
        <shortName evidence="1">Protein-methionine-S-oxide reductase</shortName>
        <ecNumber evidence="1">1.8.4.11</ecNumber>
    </recommendedName>
    <alternativeName>
        <fullName evidence="1">Peptide-methionine (S)-S-oxide reductase</fullName>
        <shortName evidence="1">Peptide Met(O) reductase</shortName>
    </alternativeName>
</protein>
<gene>
    <name evidence="1" type="primary">msrA</name>
    <name type="ordered locus">MUL_4773</name>
</gene>